<accession>P41271</accession>
<accession>A3KFI7</accession>
<accession>Q5TGZ2</accession>
<accession>Q5U0N4</accession>
<accession>Q96L68</accession>
<reference key="1">
    <citation type="journal article" date="1994" name="Oncogene">
        <title>Identification of human DAN gene, mapping to the putative neuroblastoma tumor suppressor locus.</title>
        <authorList>
            <person name="Enomoto H."/>
            <person name="Ozaki T."/>
            <person name="Takahashi E."/>
            <person name="Nomura N."/>
            <person name="Tabata S."/>
            <person name="Takahashi H."/>
            <person name="Ohnuma N."/>
            <person name="Tanabe M."/>
            <person name="Iwai J."/>
            <person name="Yoshida H."/>
            <person name="Matsunaga T."/>
            <person name="Sakiyama S."/>
        </authorList>
    </citation>
    <scope>NUCLEOTIDE SEQUENCE [MRNA] (ISOFORM 1)</scope>
    <source>
        <tissue>Lung</tissue>
    </source>
</reference>
<reference key="2">
    <citation type="submission" date="2000-03" db="EMBL/GenBank/DDBJ databases">
        <title>The genomic structure of human DAN gene.</title>
        <authorList>
            <person name="Ozaki T."/>
            <person name="Nakamura Y."/>
            <person name="Kondo K."/>
            <person name="Seki N."/>
            <person name="Ohira M."/>
            <person name="Nomura N."/>
            <person name="Ohki M."/>
            <person name="Nakagawara A."/>
            <person name="Sakiyama S."/>
        </authorList>
    </citation>
    <scope>NUCLEOTIDE SEQUENCE [GENOMIC DNA] (ISOFORM 1)</scope>
</reference>
<reference key="3">
    <citation type="submission" date="2001-07" db="EMBL/GenBank/DDBJ databases">
        <authorList>
            <person name="Wu J."/>
            <person name="Peng X."/>
            <person name="Yuan J."/>
            <person name="Qiang B."/>
        </authorList>
    </citation>
    <scope>NUCLEOTIDE SEQUENCE [MRNA] (ISOFORM 1)</scope>
</reference>
<reference key="4">
    <citation type="journal article" date="2004" name="Nat. Genet.">
        <title>Complete sequencing and characterization of 21,243 full-length human cDNAs.</title>
        <authorList>
            <person name="Ota T."/>
            <person name="Suzuki Y."/>
            <person name="Nishikawa T."/>
            <person name="Otsuki T."/>
            <person name="Sugiyama T."/>
            <person name="Irie R."/>
            <person name="Wakamatsu A."/>
            <person name="Hayashi K."/>
            <person name="Sato H."/>
            <person name="Nagai K."/>
            <person name="Kimura K."/>
            <person name="Makita H."/>
            <person name="Sekine M."/>
            <person name="Obayashi M."/>
            <person name="Nishi T."/>
            <person name="Shibahara T."/>
            <person name="Tanaka T."/>
            <person name="Ishii S."/>
            <person name="Yamamoto J."/>
            <person name="Saito K."/>
            <person name="Kawai Y."/>
            <person name="Isono Y."/>
            <person name="Nakamura Y."/>
            <person name="Nagahari K."/>
            <person name="Murakami K."/>
            <person name="Yasuda T."/>
            <person name="Iwayanagi T."/>
            <person name="Wagatsuma M."/>
            <person name="Shiratori A."/>
            <person name="Sudo H."/>
            <person name="Hosoiri T."/>
            <person name="Kaku Y."/>
            <person name="Kodaira H."/>
            <person name="Kondo H."/>
            <person name="Sugawara M."/>
            <person name="Takahashi M."/>
            <person name="Kanda K."/>
            <person name="Yokoi T."/>
            <person name="Furuya T."/>
            <person name="Kikkawa E."/>
            <person name="Omura Y."/>
            <person name="Abe K."/>
            <person name="Kamihara K."/>
            <person name="Katsuta N."/>
            <person name="Sato K."/>
            <person name="Tanikawa M."/>
            <person name="Yamazaki M."/>
            <person name="Ninomiya K."/>
            <person name="Ishibashi T."/>
            <person name="Yamashita H."/>
            <person name="Murakawa K."/>
            <person name="Fujimori K."/>
            <person name="Tanai H."/>
            <person name="Kimata M."/>
            <person name="Watanabe M."/>
            <person name="Hiraoka S."/>
            <person name="Chiba Y."/>
            <person name="Ishida S."/>
            <person name="Ono Y."/>
            <person name="Takiguchi S."/>
            <person name="Watanabe S."/>
            <person name="Yosida M."/>
            <person name="Hotuta T."/>
            <person name="Kusano J."/>
            <person name="Kanehori K."/>
            <person name="Takahashi-Fujii A."/>
            <person name="Hara H."/>
            <person name="Tanase T.-O."/>
            <person name="Nomura Y."/>
            <person name="Togiya S."/>
            <person name="Komai F."/>
            <person name="Hara R."/>
            <person name="Takeuchi K."/>
            <person name="Arita M."/>
            <person name="Imose N."/>
            <person name="Musashino K."/>
            <person name="Yuuki H."/>
            <person name="Oshima A."/>
            <person name="Sasaki N."/>
            <person name="Aotsuka S."/>
            <person name="Yoshikawa Y."/>
            <person name="Matsunawa H."/>
            <person name="Ichihara T."/>
            <person name="Shiohata N."/>
            <person name="Sano S."/>
            <person name="Moriya S."/>
            <person name="Momiyama H."/>
            <person name="Satoh N."/>
            <person name="Takami S."/>
            <person name="Terashima Y."/>
            <person name="Suzuki O."/>
            <person name="Nakagawa S."/>
            <person name="Senoh A."/>
            <person name="Mizoguchi H."/>
            <person name="Goto Y."/>
            <person name="Shimizu F."/>
            <person name="Wakebe H."/>
            <person name="Hishigaki H."/>
            <person name="Watanabe T."/>
            <person name="Sugiyama A."/>
            <person name="Takemoto M."/>
            <person name="Kawakami B."/>
            <person name="Yamazaki M."/>
            <person name="Watanabe K."/>
            <person name="Kumagai A."/>
            <person name="Itakura S."/>
            <person name="Fukuzumi Y."/>
            <person name="Fujimori Y."/>
            <person name="Komiyama M."/>
            <person name="Tashiro H."/>
            <person name="Tanigami A."/>
            <person name="Fujiwara T."/>
            <person name="Ono T."/>
            <person name="Yamada K."/>
            <person name="Fujii Y."/>
            <person name="Ozaki K."/>
            <person name="Hirao M."/>
            <person name="Ohmori Y."/>
            <person name="Kawabata A."/>
            <person name="Hikiji T."/>
            <person name="Kobatake N."/>
            <person name="Inagaki H."/>
            <person name="Ikema Y."/>
            <person name="Okamoto S."/>
            <person name="Okitani R."/>
            <person name="Kawakami T."/>
            <person name="Noguchi S."/>
            <person name="Itoh T."/>
            <person name="Shigeta K."/>
            <person name="Senba T."/>
            <person name="Matsumura K."/>
            <person name="Nakajima Y."/>
            <person name="Mizuno T."/>
            <person name="Morinaga M."/>
            <person name="Sasaki M."/>
            <person name="Togashi T."/>
            <person name="Oyama M."/>
            <person name="Hata H."/>
            <person name="Watanabe M."/>
            <person name="Komatsu T."/>
            <person name="Mizushima-Sugano J."/>
            <person name="Satoh T."/>
            <person name="Shirai Y."/>
            <person name="Takahashi Y."/>
            <person name="Nakagawa K."/>
            <person name="Okumura K."/>
            <person name="Nagase T."/>
            <person name="Nomura N."/>
            <person name="Kikuchi H."/>
            <person name="Masuho Y."/>
            <person name="Yamashita R."/>
            <person name="Nakai K."/>
            <person name="Yada T."/>
            <person name="Nakamura Y."/>
            <person name="Ohara O."/>
            <person name="Isogai T."/>
            <person name="Sugano S."/>
        </authorList>
    </citation>
    <scope>NUCLEOTIDE SEQUENCE [LARGE SCALE MRNA] (ISOFORMS 1 AND 2)</scope>
    <source>
        <tissue>Glial tumor</tissue>
        <tissue>Prostate</tissue>
        <tissue>Small intestine</tissue>
        <tissue>Synovium</tissue>
    </source>
</reference>
<reference key="5">
    <citation type="journal article" date="2006" name="Nature">
        <title>The DNA sequence and biological annotation of human chromosome 1.</title>
        <authorList>
            <person name="Gregory S.G."/>
            <person name="Barlow K.F."/>
            <person name="McLay K.E."/>
            <person name="Kaul R."/>
            <person name="Swarbreck D."/>
            <person name="Dunham A."/>
            <person name="Scott C.E."/>
            <person name="Howe K.L."/>
            <person name="Woodfine K."/>
            <person name="Spencer C.C.A."/>
            <person name="Jones M.C."/>
            <person name="Gillson C."/>
            <person name="Searle S."/>
            <person name="Zhou Y."/>
            <person name="Kokocinski F."/>
            <person name="McDonald L."/>
            <person name="Evans R."/>
            <person name="Phillips K."/>
            <person name="Atkinson A."/>
            <person name="Cooper R."/>
            <person name="Jones C."/>
            <person name="Hall R.E."/>
            <person name="Andrews T.D."/>
            <person name="Lloyd C."/>
            <person name="Ainscough R."/>
            <person name="Almeida J.P."/>
            <person name="Ambrose K.D."/>
            <person name="Anderson F."/>
            <person name="Andrew R.W."/>
            <person name="Ashwell R.I.S."/>
            <person name="Aubin K."/>
            <person name="Babbage A.K."/>
            <person name="Bagguley C.L."/>
            <person name="Bailey J."/>
            <person name="Beasley H."/>
            <person name="Bethel G."/>
            <person name="Bird C.P."/>
            <person name="Bray-Allen S."/>
            <person name="Brown J.Y."/>
            <person name="Brown A.J."/>
            <person name="Buckley D."/>
            <person name="Burton J."/>
            <person name="Bye J."/>
            <person name="Carder C."/>
            <person name="Chapman J.C."/>
            <person name="Clark S.Y."/>
            <person name="Clarke G."/>
            <person name="Clee C."/>
            <person name="Cobley V."/>
            <person name="Collier R.E."/>
            <person name="Corby N."/>
            <person name="Coville G.J."/>
            <person name="Davies J."/>
            <person name="Deadman R."/>
            <person name="Dunn M."/>
            <person name="Earthrowl M."/>
            <person name="Ellington A.G."/>
            <person name="Errington H."/>
            <person name="Frankish A."/>
            <person name="Frankland J."/>
            <person name="French L."/>
            <person name="Garner P."/>
            <person name="Garnett J."/>
            <person name="Gay L."/>
            <person name="Ghori M.R.J."/>
            <person name="Gibson R."/>
            <person name="Gilby L.M."/>
            <person name="Gillett W."/>
            <person name="Glithero R.J."/>
            <person name="Grafham D.V."/>
            <person name="Griffiths C."/>
            <person name="Griffiths-Jones S."/>
            <person name="Grocock R."/>
            <person name="Hammond S."/>
            <person name="Harrison E.S.I."/>
            <person name="Hart E."/>
            <person name="Haugen E."/>
            <person name="Heath P.D."/>
            <person name="Holmes S."/>
            <person name="Holt K."/>
            <person name="Howden P.J."/>
            <person name="Hunt A.R."/>
            <person name="Hunt S.E."/>
            <person name="Hunter G."/>
            <person name="Isherwood J."/>
            <person name="James R."/>
            <person name="Johnson C."/>
            <person name="Johnson D."/>
            <person name="Joy A."/>
            <person name="Kay M."/>
            <person name="Kershaw J.K."/>
            <person name="Kibukawa M."/>
            <person name="Kimberley A.M."/>
            <person name="King A."/>
            <person name="Knights A.J."/>
            <person name="Lad H."/>
            <person name="Laird G."/>
            <person name="Lawlor S."/>
            <person name="Leongamornlert D.A."/>
            <person name="Lloyd D.M."/>
            <person name="Loveland J."/>
            <person name="Lovell J."/>
            <person name="Lush M.J."/>
            <person name="Lyne R."/>
            <person name="Martin S."/>
            <person name="Mashreghi-Mohammadi M."/>
            <person name="Matthews L."/>
            <person name="Matthews N.S.W."/>
            <person name="McLaren S."/>
            <person name="Milne S."/>
            <person name="Mistry S."/>
            <person name="Moore M.J.F."/>
            <person name="Nickerson T."/>
            <person name="O'Dell C.N."/>
            <person name="Oliver K."/>
            <person name="Palmeiri A."/>
            <person name="Palmer S.A."/>
            <person name="Parker A."/>
            <person name="Patel D."/>
            <person name="Pearce A.V."/>
            <person name="Peck A.I."/>
            <person name="Pelan S."/>
            <person name="Phelps K."/>
            <person name="Phillimore B.J."/>
            <person name="Plumb R."/>
            <person name="Rajan J."/>
            <person name="Raymond C."/>
            <person name="Rouse G."/>
            <person name="Saenphimmachak C."/>
            <person name="Sehra H.K."/>
            <person name="Sheridan E."/>
            <person name="Shownkeen R."/>
            <person name="Sims S."/>
            <person name="Skuce C.D."/>
            <person name="Smith M."/>
            <person name="Steward C."/>
            <person name="Subramanian S."/>
            <person name="Sycamore N."/>
            <person name="Tracey A."/>
            <person name="Tromans A."/>
            <person name="Van Helmond Z."/>
            <person name="Wall M."/>
            <person name="Wallis J.M."/>
            <person name="White S."/>
            <person name="Whitehead S.L."/>
            <person name="Wilkinson J.E."/>
            <person name="Willey D.L."/>
            <person name="Williams H."/>
            <person name="Wilming L."/>
            <person name="Wray P.W."/>
            <person name="Wu Z."/>
            <person name="Coulson A."/>
            <person name="Vaudin M."/>
            <person name="Sulston J.E."/>
            <person name="Durbin R.M."/>
            <person name="Hubbard T."/>
            <person name="Wooster R."/>
            <person name="Dunham I."/>
            <person name="Carter N.P."/>
            <person name="McVean G."/>
            <person name="Ross M.T."/>
            <person name="Harrow J."/>
            <person name="Olson M.V."/>
            <person name="Beck S."/>
            <person name="Rogers J."/>
            <person name="Bentley D.R."/>
        </authorList>
    </citation>
    <scope>NUCLEOTIDE SEQUENCE [LARGE SCALE GENOMIC DNA]</scope>
</reference>
<reference key="6">
    <citation type="submission" date="2005-07" db="EMBL/GenBank/DDBJ databases">
        <authorList>
            <person name="Mural R.J."/>
            <person name="Istrail S."/>
            <person name="Sutton G.G."/>
            <person name="Florea L."/>
            <person name="Halpern A.L."/>
            <person name="Mobarry C.M."/>
            <person name="Lippert R."/>
            <person name="Walenz B."/>
            <person name="Shatkay H."/>
            <person name="Dew I."/>
            <person name="Miller J.R."/>
            <person name="Flanigan M.J."/>
            <person name="Edwards N.J."/>
            <person name="Bolanos R."/>
            <person name="Fasulo D."/>
            <person name="Halldorsson B.V."/>
            <person name="Hannenhalli S."/>
            <person name="Turner R."/>
            <person name="Yooseph S."/>
            <person name="Lu F."/>
            <person name="Nusskern D.R."/>
            <person name="Shue B.C."/>
            <person name="Zheng X.H."/>
            <person name="Zhong F."/>
            <person name="Delcher A.L."/>
            <person name="Huson D.H."/>
            <person name="Kravitz S.A."/>
            <person name="Mouchard L."/>
            <person name="Reinert K."/>
            <person name="Remington K.A."/>
            <person name="Clark A.G."/>
            <person name="Waterman M.S."/>
            <person name="Eichler E.E."/>
            <person name="Adams M.D."/>
            <person name="Hunkapiller M.W."/>
            <person name="Myers E.W."/>
            <person name="Venter J.C."/>
        </authorList>
    </citation>
    <scope>NUCLEOTIDE SEQUENCE [LARGE SCALE GENOMIC DNA]</scope>
</reference>
<reference key="7">
    <citation type="journal article" date="2004" name="Genome Res.">
        <title>The status, quality, and expansion of the NIH full-length cDNA project: the Mammalian Gene Collection (MGC).</title>
        <authorList>
            <consortium name="The MGC Project Team"/>
        </authorList>
    </citation>
    <scope>NUCLEOTIDE SEQUENCE [LARGE SCALE MRNA] (ISOFORM 1)</scope>
    <source>
        <tissue>Eye</tissue>
    </source>
</reference>
<reference key="8">
    <citation type="submission" date="2004-10" db="EMBL/GenBank/DDBJ databases">
        <title>Cloning of human full-length CDSs in BD Creator(TM) system donor vector.</title>
        <authorList>
            <person name="Kalnine N."/>
            <person name="Chen X."/>
            <person name="Rolfs A."/>
            <person name="Halleck A."/>
            <person name="Hines L."/>
            <person name="Eisenstein S."/>
            <person name="Koundinya M."/>
            <person name="Raphael J."/>
            <person name="Moreira D."/>
            <person name="Kelley T."/>
            <person name="LaBaer J."/>
            <person name="Lin Y."/>
            <person name="Phelan M."/>
            <person name="Farmer A."/>
        </authorList>
    </citation>
    <scope>NUCLEOTIDE SEQUENCE [LARGE SCALE MRNA] OF 2-181 (ISOFORM 1)</scope>
</reference>
<reference key="9">
    <citation type="journal article" date="2001" name="J. Protein Chem.">
        <title>Purification and partial amino acid sequence of proteins from human epidermal keratinocyte conditioned medium.</title>
        <authorList>
            <person name="Ahmed A."/>
            <person name="Kandola P."/>
            <person name="Ziada G."/>
            <person name="Parenteau N."/>
        </authorList>
    </citation>
    <scope>PROTEIN SEQUENCE OF 17-37</scope>
    <source>
        <tissue>Foreskin keratinocyte</tissue>
    </source>
</reference>
<evidence type="ECO:0000250" key="1"/>
<evidence type="ECO:0000255" key="2"/>
<evidence type="ECO:0000256" key="3">
    <source>
        <dbReference type="SAM" id="MobiDB-lite"/>
    </source>
</evidence>
<evidence type="ECO:0000269" key="4">
    <source>
    </source>
</evidence>
<evidence type="ECO:0000303" key="5">
    <source>
    </source>
</evidence>
<evidence type="ECO:0000305" key="6"/>
<evidence type="ECO:0007829" key="7">
    <source>
        <dbReference type="PDB" id="4X1J"/>
    </source>
</evidence>
<evidence type="ECO:0007829" key="8">
    <source>
        <dbReference type="PDB" id="4YU8"/>
    </source>
</evidence>
<gene>
    <name type="primary">NBL1</name>
    <name type="synonym">DAN</name>
    <name type="synonym">DAND1</name>
</gene>
<dbReference type="EMBL" id="D28124">
    <property type="protein sequence ID" value="BAA05671.1"/>
    <property type="status" value="ALT_INIT"/>
    <property type="molecule type" value="mRNA"/>
</dbReference>
<dbReference type="EMBL" id="D89013">
    <property type="protein sequence ID" value="BAA92265.1"/>
    <property type="status" value="ALT_INIT"/>
    <property type="molecule type" value="Genomic_DNA"/>
</dbReference>
<dbReference type="EMBL" id="AY049783">
    <property type="protein sequence ID" value="AAL15440.1"/>
    <property type="molecule type" value="mRNA"/>
</dbReference>
<dbReference type="EMBL" id="AK289456">
    <property type="protein sequence ID" value="BAF82145.1"/>
    <property type="molecule type" value="mRNA"/>
</dbReference>
<dbReference type="EMBL" id="AK292101">
    <property type="protein sequence ID" value="BAF84790.1"/>
    <property type="molecule type" value="mRNA"/>
</dbReference>
<dbReference type="EMBL" id="AK300872">
    <property type="protein sequence ID" value="BAG62517.1"/>
    <property type="molecule type" value="mRNA"/>
</dbReference>
<dbReference type="EMBL" id="AK313265">
    <property type="protein sequence ID" value="BAG36074.1"/>
    <property type="status" value="ALT_INIT"/>
    <property type="molecule type" value="mRNA"/>
</dbReference>
<dbReference type="EMBL" id="AL031727">
    <property type="status" value="NOT_ANNOTATED_CDS"/>
    <property type="molecule type" value="Genomic_DNA"/>
</dbReference>
<dbReference type="EMBL" id="CH471134">
    <property type="protein sequence ID" value="EAW94894.1"/>
    <property type="molecule type" value="Genomic_DNA"/>
</dbReference>
<dbReference type="EMBL" id="CH471134">
    <property type="protein sequence ID" value="EAW94895.1"/>
    <property type="molecule type" value="Genomic_DNA"/>
</dbReference>
<dbReference type="EMBL" id="BC012037">
    <property type="protein sequence ID" value="AAH12037.1"/>
    <property type="status" value="ALT_INIT"/>
    <property type="molecule type" value="mRNA"/>
</dbReference>
<dbReference type="EMBL" id="BT019423">
    <property type="protein sequence ID" value="AAV38230.1"/>
    <property type="molecule type" value="mRNA"/>
</dbReference>
<dbReference type="CCDS" id="CCDS41278.1">
    <molecule id="P41271-2"/>
</dbReference>
<dbReference type="RefSeq" id="NP_001191013.1">
    <molecule id="P41271-1"/>
    <property type="nucleotide sequence ID" value="NM_001204084.3"/>
</dbReference>
<dbReference type="RefSeq" id="NP_001191014.1">
    <molecule id="P41271-1"/>
    <property type="nucleotide sequence ID" value="NM_001204085.2"/>
</dbReference>
<dbReference type="RefSeq" id="NP_001191017.1">
    <property type="nucleotide sequence ID" value="NM_001204088.1"/>
</dbReference>
<dbReference type="RefSeq" id="NP_001191018.1">
    <molecule id="P41271-1"/>
    <property type="nucleotide sequence ID" value="NM_001204089.1"/>
</dbReference>
<dbReference type="RefSeq" id="NP_001265093.1">
    <molecule id="P41271-1"/>
    <property type="nucleotide sequence ID" value="NM_001278164.2"/>
</dbReference>
<dbReference type="RefSeq" id="NP_001265094.1">
    <molecule id="P41271-1"/>
    <property type="nucleotide sequence ID" value="NM_001278165.2"/>
</dbReference>
<dbReference type="RefSeq" id="NP_001265095.1">
    <molecule id="P41271-1"/>
    <property type="nucleotide sequence ID" value="NM_001278166.2"/>
</dbReference>
<dbReference type="RefSeq" id="NP_005371.2">
    <molecule id="P41271-1"/>
    <property type="nucleotide sequence ID" value="NM_005380.8"/>
</dbReference>
<dbReference type="RefSeq" id="NP_877421.2">
    <molecule id="P41271-2"/>
    <property type="nucleotide sequence ID" value="NM_182744.4"/>
</dbReference>
<dbReference type="PDB" id="4X1J">
    <property type="method" value="X-ray"/>
    <property type="resolution" value="2.50 A"/>
    <property type="chains" value="A/B=17-132"/>
</dbReference>
<dbReference type="PDB" id="4YU8">
    <property type="method" value="X-ray"/>
    <property type="resolution" value="1.80 A"/>
    <property type="chains" value="A=2-140"/>
</dbReference>
<dbReference type="PDBsum" id="4X1J"/>
<dbReference type="PDBsum" id="4YU8"/>
<dbReference type="SMR" id="P41271"/>
<dbReference type="BioGRID" id="110761">
    <property type="interactions" value="16"/>
</dbReference>
<dbReference type="BioGRID" id="1529413">
    <property type="interactions" value="32"/>
</dbReference>
<dbReference type="FunCoup" id="P41271">
    <property type="interactions" value="319"/>
</dbReference>
<dbReference type="IntAct" id="P41271">
    <property type="interactions" value="23"/>
</dbReference>
<dbReference type="STRING" id="9606.ENSP00000289749"/>
<dbReference type="GlyConnect" id="1549">
    <property type="glycosylation" value="7 N-Linked glycans (1 site)"/>
</dbReference>
<dbReference type="GlyCosmos" id="P41271">
    <property type="glycosylation" value="2 sites, 12 glycans"/>
</dbReference>
<dbReference type="GlyGen" id="P41271">
    <property type="glycosylation" value="3 sites, 12 N-linked glycans (1 site), 2 O-linked glycans (2 sites)"/>
</dbReference>
<dbReference type="iPTMnet" id="P41271"/>
<dbReference type="PhosphoSitePlus" id="P41271"/>
<dbReference type="BioMuta" id="NBL1"/>
<dbReference type="DMDM" id="729293"/>
<dbReference type="jPOST" id="P41271"/>
<dbReference type="MassIVE" id="P41271"/>
<dbReference type="PaxDb" id="9606-ENSP00000289749"/>
<dbReference type="PeptideAtlas" id="P41271"/>
<dbReference type="ProteomicsDB" id="55455">
    <molecule id="P41271-1"/>
</dbReference>
<dbReference type="ProteomicsDB" id="55456">
    <molecule id="P41271-2"/>
</dbReference>
<dbReference type="Antibodypedia" id="29695">
    <property type="antibodies" value="320 antibodies from 33 providers"/>
</dbReference>
<dbReference type="DNASU" id="4681"/>
<dbReference type="Ensembl" id="ENST00000289749.6">
    <molecule id="P41271-2"/>
    <property type="protein sequence ID" value="ENSP00000289749.2"/>
    <property type="gene ID" value="ENSG00000158747.15"/>
</dbReference>
<dbReference type="Ensembl" id="ENST00000375136.8">
    <molecule id="P41271-1"/>
    <property type="protein sequence ID" value="ENSP00000364278.4"/>
    <property type="gene ID" value="ENSG00000158747.15"/>
</dbReference>
<dbReference type="Ensembl" id="ENST00000548815.2">
    <molecule id="P41271-1"/>
    <property type="protein sequence ID" value="ENSP00000449007.2"/>
    <property type="gene ID" value="ENSG00000158747.15"/>
</dbReference>
<dbReference type="Ensembl" id="ENST00000602662.1">
    <molecule id="P41271-1"/>
    <property type="protein sequence ID" value="ENSP00000473411.1"/>
    <property type="gene ID" value="ENSG00000158747.15"/>
</dbReference>
<dbReference type="Ensembl" id="ENST00000618761.4">
    <molecule id="P41271-1"/>
    <property type="protein sequence ID" value="ENSP00000483061.1"/>
    <property type="gene ID" value="ENSG00000158747.15"/>
</dbReference>
<dbReference type="Ensembl" id="ENST00000621723.4">
    <molecule id="P41271-1"/>
    <property type="protein sequence ID" value="ENSP00000478885.1"/>
    <property type="gene ID" value="ENSG00000158747.15"/>
</dbReference>
<dbReference type="Ensembl" id="ENST00000622566.4">
    <molecule id="P41271-1"/>
    <property type="protein sequence ID" value="ENSP00000480391.1"/>
    <property type="gene ID" value="ENSG00000158747.15"/>
</dbReference>
<dbReference type="GeneID" id="100532736"/>
<dbReference type="GeneID" id="4681"/>
<dbReference type="KEGG" id="hsa:100532736"/>
<dbReference type="KEGG" id="hsa:4681"/>
<dbReference type="MANE-Select" id="ENST00000375136.8">
    <property type="protein sequence ID" value="ENSP00000364278.4"/>
    <property type="RefSeq nucleotide sequence ID" value="NM_005380.8"/>
    <property type="RefSeq protein sequence ID" value="NP_005371.2"/>
</dbReference>
<dbReference type="UCSC" id="uc001bcj.3">
    <molecule id="P41271-1"/>
    <property type="organism name" value="human"/>
</dbReference>
<dbReference type="AGR" id="HGNC:48338"/>
<dbReference type="AGR" id="HGNC:7650"/>
<dbReference type="CTD" id="100532736"/>
<dbReference type="CTD" id="4681"/>
<dbReference type="DisGeNET" id="100532736"/>
<dbReference type="DisGeNET" id="4681"/>
<dbReference type="GeneCards" id="NBL1"/>
<dbReference type="HGNC" id="HGNC:7650">
    <property type="gene designation" value="NBL1"/>
</dbReference>
<dbReference type="HPA" id="ENSG00000158747">
    <property type="expression patterns" value="Tissue enhanced (cervix)"/>
</dbReference>
<dbReference type="MIM" id="600613">
    <property type="type" value="gene"/>
</dbReference>
<dbReference type="neXtProt" id="NX_P41271"/>
<dbReference type="OpenTargets" id="ENSG00000158747"/>
<dbReference type="PharmGKB" id="PA31456"/>
<dbReference type="VEuPathDB" id="HostDB:ENSG00000158747"/>
<dbReference type="eggNOG" id="ENOG502RYP0">
    <property type="taxonomic scope" value="Eukaryota"/>
</dbReference>
<dbReference type="GeneTree" id="ENSGT00940000154209"/>
<dbReference type="InParanoid" id="P41271"/>
<dbReference type="OMA" id="QTMWEIV"/>
<dbReference type="OrthoDB" id="8196271at2759"/>
<dbReference type="PAN-GO" id="P41271">
    <property type="GO annotations" value="5 GO annotations based on evolutionary models"/>
</dbReference>
<dbReference type="TreeFam" id="TF106445"/>
<dbReference type="PathwayCommons" id="P41271"/>
<dbReference type="SignaLink" id="P41271"/>
<dbReference type="BioGRID-ORCS" id="100532736">
    <property type="hits" value="15 hits in 234 CRISPR screens"/>
</dbReference>
<dbReference type="BioGRID-ORCS" id="4681">
    <property type="hits" value="12 hits in 1062 CRISPR screens"/>
</dbReference>
<dbReference type="EvolutionaryTrace" id="P41271"/>
<dbReference type="Pharos" id="P41271">
    <property type="development level" value="Tbio"/>
</dbReference>
<dbReference type="PRO" id="PR:P41271"/>
<dbReference type="Proteomes" id="UP000005640">
    <property type="component" value="Chromosome 1"/>
</dbReference>
<dbReference type="RNAct" id="P41271">
    <property type="molecule type" value="protein"/>
</dbReference>
<dbReference type="Bgee" id="ENSG00000158747">
    <property type="expression patterns" value="Expressed in endocervix and 211 other cell types or tissues"/>
</dbReference>
<dbReference type="ExpressionAtlas" id="P41271">
    <property type="expression patterns" value="baseline and differential"/>
</dbReference>
<dbReference type="GO" id="GO:0005615">
    <property type="term" value="C:extracellular space"/>
    <property type="evidence" value="ECO:0000314"/>
    <property type="project" value="UniProtKB"/>
</dbReference>
<dbReference type="GO" id="GO:0036122">
    <property type="term" value="F:BMP binding"/>
    <property type="evidence" value="ECO:0000250"/>
    <property type="project" value="BHF-UCL"/>
</dbReference>
<dbReference type="GO" id="GO:0042802">
    <property type="term" value="F:identical protein binding"/>
    <property type="evidence" value="ECO:0000315"/>
    <property type="project" value="UniProtKB"/>
</dbReference>
<dbReference type="GO" id="GO:0016015">
    <property type="term" value="F:morphogen activity"/>
    <property type="evidence" value="ECO:0000250"/>
    <property type="project" value="BHF-UCL"/>
</dbReference>
<dbReference type="GO" id="GO:0048018">
    <property type="term" value="F:receptor ligand activity"/>
    <property type="evidence" value="ECO:0000318"/>
    <property type="project" value="GO_Central"/>
</dbReference>
<dbReference type="GO" id="GO:0048263">
    <property type="term" value="P:determination of dorsal identity"/>
    <property type="evidence" value="ECO:0000250"/>
    <property type="project" value="BHF-UCL"/>
</dbReference>
<dbReference type="GO" id="GO:0030514">
    <property type="term" value="P:negative regulation of BMP signaling pathway"/>
    <property type="evidence" value="ECO:0000314"/>
    <property type="project" value="UniProtKB"/>
</dbReference>
<dbReference type="GO" id="GO:0090027">
    <property type="term" value="P:negative regulation of monocyte chemotaxis"/>
    <property type="evidence" value="ECO:0000250"/>
    <property type="project" value="BHF-UCL"/>
</dbReference>
<dbReference type="GO" id="GO:0007399">
    <property type="term" value="P:nervous system development"/>
    <property type="evidence" value="ECO:0000250"/>
    <property type="project" value="BHF-UCL"/>
</dbReference>
<dbReference type="GO" id="GO:0048812">
    <property type="term" value="P:neuron projection morphogenesis"/>
    <property type="evidence" value="ECO:0000250"/>
    <property type="project" value="BHF-UCL"/>
</dbReference>
<dbReference type="GO" id="GO:0045666">
    <property type="term" value="P:positive regulation of neuron differentiation"/>
    <property type="evidence" value="ECO:0000250"/>
    <property type="project" value="BHF-UCL"/>
</dbReference>
<dbReference type="GO" id="GO:0038098">
    <property type="term" value="P:sequestering of BMP from receptor via BMP binding"/>
    <property type="evidence" value="ECO:0000314"/>
    <property type="project" value="UniProtKB"/>
</dbReference>
<dbReference type="GO" id="GO:0035582">
    <property type="term" value="P:sequestering of BMP in extracellular matrix"/>
    <property type="evidence" value="ECO:0000250"/>
    <property type="project" value="BHF-UCL"/>
</dbReference>
<dbReference type="FunFam" id="2.10.90.10:FF:000016">
    <property type="entry name" value="Neuroblastoma suppressor of tumorigenicity 1"/>
    <property type="match status" value="1"/>
</dbReference>
<dbReference type="Gene3D" id="2.10.90.10">
    <property type="entry name" value="Cystine-knot cytokines"/>
    <property type="match status" value="1"/>
</dbReference>
<dbReference type="InterPro" id="IPR006207">
    <property type="entry name" value="Cys_knot_C"/>
</dbReference>
<dbReference type="InterPro" id="IPR029034">
    <property type="entry name" value="Cystine-knot_cytokine"/>
</dbReference>
<dbReference type="InterPro" id="IPR004133">
    <property type="entry name" value="DAN"/>
</dbReference>
<dbReference type="InterPro" id="IPR016728">
    <property type="entry name" value="Neuroblast_suppress_tumour_1"/>
</dbReference>
<dbReference type="PANTHER" id="PTHR15283">
    <property type="entry name" value="GREMLIN 1"/>
    <property type="match status" value="1"/>
</dbReference>
<dbReference type="PANTHER" id="PTHR15283:SF5">
    <property type="entry name" value="NEUROBLASTOMA SUPPRESSOR OF TUMORIGENICITY 1"/>
    <property type="match status" value="1"/>
</dbReference>
<dbReference type="Pfam" id="PF03045">
    <property type="entry name" value="DAN"/>
    <property type="match status" value="1"/>
</dbReference>
<dbReference type="PIRSF" id="PIRSF018557">
    <property type="entry name" value="DAN_sub"/>
    <property type="match status" value="1"/>
</dbReference>
<dbReference type="SMART" id="SM00041">
    <property type="entry name" value="CT"/>
    <property type="match status" value="1"/>
</dbReference>
<feature type="signal peptide" evidence="4">
    <location>
        <begin position="1"/>
        <end position="16"/>
    </location>
</feature>
<feature type="chain" id="PRO_0000006722" description="Neuroblastoma suppressor of tumorigenicity 1">
    <location>
        <begin position="17"/>
        <end position="181"/>
    </location>
</feature>
<feature type="domain" description="CTCK">
    <location>
        <begin position="35"/>
        <end position="124"/>
    </location>
</feature>
<feature type="region of interest" description="Disordered" evidence="3">
    <location>
        <begin position="132"/>
        <end position="181"/>
    </location>
</feature>
<feature type="disulfide bond" evidence="1">
    <location>
        <begin position="35"/>
        <end position="85"/>
    </location>
</feature>
<feature type="disulfide bond" evidence="1">
    <location>
        <begin position="49"/>
        <end position="99"/>
    </location>
</feature>
<feature type="disulfide bond" evidence="1">
    <location>
        <begin position="59"/>
        <end position="118"/>
    </location>
</feature>
<feature type="disulfide bond" evidence="1">
    <location>
        <begin position="63"/>
        <end position="120"/>
    </location>
</feature>
<feature type="disulfide bond" evidence="2">
    <location>
        <begin position="82"/>
        <end position="123"/>
    </location>
</feature>
<feature type="splice variant" id="VSP_036438" description="In isoform 2." evidence="5">
    <original>M</original>
    <variation>MPGNLMSQTSRAVSIWKFPAKLGKTHGHRALEATGM</variation>
    <location>
        <position position="1"/>
    </location>
</feature>
<feature type="strand" evidence="8">
    <location>
        <begin position="34"/>
        <end position="44"/>
    </location>
</feature>
<feature type="strand" evidence="7">
    <location>
        <begin position="47"/>
        <end position="50"/>
    </location>
</feature>
<feature type="strand" evidence="8">
    <location>
        <begin position="52"/>
        <end position="62"/>
    </location>
</feature>
<feature type="strand" evidence="8">
    <location>
        <begin position="85"/>
        <end position="98"/>
    </location>
</feature>
<feature type="strand" evidence="8">
    <location>
        <begin position="103"/>
        <end position="105"/>
    </location>
</feature>
<feature type="strand" evidence="8">
    <location>
        <begin position="107"/>
        <end position="120"/>
    </location>
</feature>
<organism>
    <name type="scientific">Homo sapiens</name>
    <name type="common">Human</name>
    <dbReference type="NCBI Taxonomy" id="9606"/>
    <lineage>
        <taxon>Eukaryota</taxon>
        <taxon>Metazoa</taxon>
        <taxon>Chordata</taxon>
        <taxon>Craniata</taxon>
        <taxon>Vertebrata</taxon>
        <taxon>Euteleostomi</taxon>
        <taxon>Mammalia</taxon>
        <taxon>Eutheria</taxon>
        <taxon>Euarchontoglires</taxon>
        <taxon>Primates</taxon>
        <taxon>Haplorrhini</taxon>
        <taxon>Catarrhini</taxon>
        <taxon>Hominidae</taxon>
        <taxon>Homo</taxon>
    </lineage>
</organism>
<comment type="function">
    <text>Possible candidate as a tumor suppressor gene of neuroblastoma. May play an important role in preventing cells from entering the final stage (G1/S) of the transformation process.</text>
</comment>
<comment type="subunit">
    <text evidence="1">Homodimer.</text>
</comment>
<comment type="interaction">
    <interactant intactId="EBI-10208650">
        <id>P41271</id>
    </interactant>
    <interactant intactId="EBI-746987">
        <id>P62166</id>
        <label>NCS1</label>
    </interactant>
    <organismsDiffer>false</organismsDiffer>
    <experiments>3</experiments>
</comment>
<comment type="interaction">
    <interactant intactId="EBI-10208650">
        <id>P41271</id>
    </interactant>
    <interactant intactId="EBI-741480">
        <id>Q9UMX0</id>
        <label>UBQLN1</label>
    </interactant>
    <organismsDiffer>false</organismsDiffer>
    <experiments>3</experiments>
</comment>
<comment type="interaction">
    <interactant intactId="EBI-10208650">
        <id>P41271</id>
    </interactant>
    <interactant intactId="EBI-10173939">
        <id>Q9UMX0-2</id>
        <label>UBQLN1</label>
    </interactant>
    <organismsDiffer>false</organismsDiffer>
    <experiments>3</experiments>
</comment>
<comment type="interaction">
    <interactant intactId="EBI-10208650">
        <id>P41271</id>
    </interactant>
    <interactant intactId="EBI-10182121">
        <id>Q8NF64-2</id>
        <label>ZMIZ2</label>
    </interactant>
    <organismsDiffer>false</organismsDiffer>
    <experiments>3</experiments>
</comment>
<comment type="interaction">
    <interactant intactId="EBI-12135485">
        <id>P41271-2</id>
    </interactant>
    <interactant intactId="EBI-77613">
        <id>P05067</id>
        <label>APP</label>
    </interactant>
    <organismsDiffer>false</organismsDiffer>
    <experiments>3</experiments>
</comment>
<comment type="interaction">
    <interactant intactId="EBI-12135485">
        <id>P41271-2</id>
    </interactant>
    <interactant intactId="EBI-1383687">
        <id>Q9UQM7</id>
        <label>CAMK2A</label>
    </interactant>
    <organismsDiffer>false</organismsDiffer>
    <experiments>3</experiments>
</comment>
<comment type="interaction">
    <interactant intactId="EBI-12135485">
        <id>P41271-2</id>
    </interactant>
    <interactant intactId="EBI-25837549">
        <id>P28329-3</id>
        <label>CHAT</label>
    </interactant>
    <organismsDiffer>false</organismsDiffer>
    <experiments>3</experiments>
</comment>
<comment type="interaction">
    <interactant intactId="EBI-12135485">
        <id>P41271-2</id>
    </interactant>
    <interactant intactId="EBI-10976677">
        <id>G5E9A7</id>
        <label>DMWD</label>
    </interactant>
    <organismsDiffer>false</organismsDiffer>
    <experiments>3</experiments>
</comment>
<comment type="interaction">
    <interactant intactId="EBI-12135485">
        <id>P41271-2</id>
    </interactant>
    <interactant intactId="EBI-18398199">
        <id>A0A0U1RQF7</id>
        <label>DPEP2NB</label>
    </interactant>
    <organismsDiffer>false</organismsDiffer>
    <experiments>3</experiments>
</comment>
<comment type="interaction">
    <interactant intactId="EBI-12135485">
        <id>P41271-2</id>
    </interactant>
    <interactant intactId="EBI-348399">
        <id>P22607</id>
        <label>FGFR3</label>
    </interactant>
    <organismsDiffer>false</organismsDiffer>
    <experiments>3</experiments>
</comment>
<comment type="interaction">
    <interactant intactId="EBI-12135485">
        <id>P41271-2</id>
    </interactant>
    <interactant intactId="EBI-8285963">
        <id>Q14957</id>
        <label>GRIN2C</label>
    </interactant>
    <organismsDiffer>false</organismsDiffer>
    <experiments>3</experiments>
</comment>
<comment type="interaction">
    <interactant intactId="EBI-12135485">
        <id>P41271-2</id>
    </interactant>
    <interactant intactId="EBI-749311">
        <id>P37235</id>
        <label>HPCAL1</label>
    </interactant>
    <organismsDiffer>false</organismsDiffer>
    <experiments>3</experiments>
</comment>
<comment type="interaction">
    <interactant intactId="EBI-12135485">
        <id>P41271-2</id>
    </interactant>
    <interactant intactId="EBI-1052037">
        <id>Q8IUC1</id>
        <label>KRTAP11-1</label>
    </interactant>
    <organismsDiffer>false</organismsDiffer>
    <experiments>3</experiments>
</comment>
<comment type="interaction">
    <interactant intactId="EBI-12135485">
        <id>P41271-2</id>
    </interactant>
    <interactant intactId="EBI-13067910">
        <id>Q96JA1-2</id>
        <label>LRIG1</label>
    </interactant>
    <organismsDiffer>false</organismsDiffer>
    <experiments>3</experiments>
</comment>
<comment type="interaction">
    <interactant intactId="EBI-12135485">
        <id>P41271-2</id>
    </interactant>
    <interactant intactId="EBI-16439278">
        <id>Q6FHY5</id>
        <label>MEOX2</label>
    </interactant>
    <organismsDiffer>false</organismsDiffer>
    <experiments>3</experiments>
</comment>
<comment type="interaction">
    <interactant intactId="EBI-12135485">
        <id>P41271-2</id>
    </interactant>
    <interactant intactId="EBI-358272">
        <id>P52815</id>
        <label>MRPL12</label>
    </interactant>
    <organismsDiffer>false</organismsDiffer>
    <experiments>3</experiments>
</comment>
<comment type="interaction">
    <interactant intactId="EBI-12135485">
        <id>P41271-2</id>
    </interactant>
    <interactant intactId="EBI-749635">
        <id>P61601</id>
        <label>NCALD</label>
    </interactant>
    <organismsDiffer>false</organismsDiffer>
    <experiments>3</experiments>
</comment>
<comment type="interaction">
    <interactant intactId="EBI-12135485">
        <id>P41271-2</id>
    </interactant>
    <interactant intactId="EBI-12826629">
        <id>Q9BZM2-2</id>
        <label>PLA2G2F</label>
    </interactant>
    <organismsDiffer>false</organismsDiffer>
    <experiments>3</experiments>
</comment>
<comment type="interaction">
    <interactant intactId="EBI-12135485">
        <id>P41271-2</id>
    </interactant>
    <interactant intactId="EBI-458391">
        <id>P04271</id>
        <label>S100B</label>
    </interactant>
    <organismsDiffer>false</organismsDiffer>
    <experiments>3</experiments>
</comment>
<comment type="interaction">
    <interactant intactId="EBI-12135485">
        <id>P41271-2</id>
    </interactant>
    <interactant intactId="EBI-1172957">
        <id>P34741</id>
        <label>SDC2</label>
    </interactant>
    <organismsDiffer>false</organismsDiffer>
    <experiments>3</experiments>
</comment>
<comment type="interaction">
    <interactant intactId="EBI-12135485">
        <id>P41271-2</id>
    </interactant>
    <interactant intactId="EBI-355293">
        <id>P03973</id>
        <label>SLPI</label>
    </interactant>
    <organismsDiffer>false</organismsDiffer>
    <experiments>3</experiments>
</comment>
<comment type="interaction">
    <interactant intactId="EBI-12135485">
        <id>P41271-2</id>
    </interactant>
    <interactant intactId="EBI-5235340">
        <id>Q7Z699</id>
        <label>SPRED1</label>
    </interactant>
    <organismsDiffer>false</organismsDiffer>
    <experiments>3</experiments>
</comment>
<comment type="interaction">
    <interactant intactId="EBI-12135485">
        <id>P41271-2</id>
    </interactant>
    <interactant intactId="EBI-25892332">
        <id>P43405-2</id>
        <label>SYK</label>
    </interactant>
    <organismsDiffer>false</organismsDiffer>
    <experiments>3</experiments>
</comment>
<comment type="interaction">
    <interactant intactId="EBI-12135485">
        <id>P41271-2</id>
    </interactant>
    <interactant intactId="EBI-741480">
        <id>Q9UMX0</id>
        <label>UBQLN1</label>
    </interactant>
    <organismsDiffer>false</organismsDiffer>
    <experiments>3</experiments>
</comment>
<comment type="interaction">
    <interactant intactId="EBI-12135485">
        <id>P41271-2</id>
    </interactant>
    <interactant intactId="EBI-947187">
        <id>Q9UHD9</id>
        <label>UBQLN2</label>
    </interactant>
    <organismsDiffer>false</organismsDiffer>
    <experiments>3</experiments>
</comment>
<comment type="subcellular location">
    <subcellularLocation>
        <location>Secreted</location>
    </subcellularLocation>
</comment>
<comment type="alternative products">
    <event type="alternative splicing"/>
    <isoform>
        <id>P41271-1</id>
        <name>1</name>
        <sequence type="displayed"/>
    </isoform>
    <isoform>
        <id>P41271-2</id>
        <name>2</name>
        <sequence type="described" ref="VSP_036438"/>
    </isoform>
</comment>
<comment type="tissue specificity">
    <text>Most abundant in normal lung and meningioma.</text>
</comment>
<comment type="similarity">
    <text evidence="6">Belongs to the DAN family.</text>
</comment>
<comment type="sequence caution" evidence="6">
    <conflict type="erroneous initiation">
        <sequence resource="EMBL-CDS" id="AAH12037"/>
    </conflict>
    <text>Truncated N-terminus.</text>
</comment>
<comment type="sequence caution" evidence="6">
    <conflict type="erroneous initiation">
        <sequence resource="EMBL-CDS" id="BAA05671"/>
    </conflict>
    <text>Truncated N-terminus.</text>
</comment>
<comment type="sequence caution" evidence="6">
    <conflict type="erroneous initiation">
        <sequence resource="EMBL-CDS" id="BAA92265"/>
    </conflict>
    <text>Truncated N-terminus.</text>
</comment>
<comment type="sequence caution" evidence="6">
    <conflict type="erroneous initiation">
        <sequence resource="EMBL-CDS" id="BAG36074"/>
    </conflict>
    <text>Truncated N-terminus.</text>
</comment>
<protein>
    <recommendedName>
        <fullName>Neuroblastoma suppressor of tumorigenicity 1</fullName>
    </recommendedName>
    <alternativeName>
        <fullName>DAN domain family member 1</fullName>
    </alternativeName>
    <alternativeName>
        <fullName>Protein N03</fullName>
    </alternativeName>
    <alternativeName>
        <fullName>Zinc finger protein DAN</fullName>
    </alternativeName>
</protein>
<proteinExistence type="evidence at protein level"/>
<name>NBL1_HUMAN</name>
<keyword id="KW-0002">3D-structure</keyword>
<keyword id="KW-0025">Alternative splicing</keyword>
<keyword id="KW-0903">Direct protein sequencing</keyword>
<keyword id="KW-1015">Disulfide bond</keyword>
<keyword id="KW-1267">Proteomics identification</keyword>
<keyword id="KW-1185">Reference proteome</keyword>
<keyword id="KW-0964">Secreted</keyword>
<keyword id="KW-0732">Signal</keyword>
<keyword id="KW-0043">Tumor suppressor</keyword>
<sequence length="181" mass="19408">MMLRVLVGAVLPAMLLAAPPPINKLALFPDKSAWCEAKNITQIVGHSGCEAKSIQNRACLGQCFSYSVPNTFPQSTESLVHCDSCMPAQSMWEIVTLECPGHEEVPRVDKLVEKILHCSCQACGKEPSHEGLSVYVQGEDGPGSQPGTHPHPHPHPHPGGQTPEPEDPPGAPHTEEEGAED</sequence>